<comment type="function">
    <text evidence="4">Component of the spanin complex that disrupts the host outer membrane and participates in cell lysis during virus exit. The spanin complex conducts the final step in host lysis by disrupting the outer membrane after holin and endolysin action have permeabilized the inner membrane and degraded the host peptidoglycans. Host outer membrane disruption is possibly due to local fusion between the inner and outer membrane performed by the spanin complex.</text>
</comment>
<comment type="subunit">
    <text evidence="5">Interacts (via C-terminus) with the spanin outer lipoprotein subunit (o-spanin) (via C-terminus). Part of the spanin complex which spans the entire periplasmic space. The spanin complex is composed of spanin inner membrane subunit and spanin outer membrane subunit.</text>
</comment>
<comment type="subcellular location">
    <subcellularLocation>
        <location evidence="4">Host cell inner membrane</location>
        <topology evidence="4">Single-pass type II membrane protein</topology>
        <orientation evidence="4">Periplasmic side</orientation>
    </subcellularLocation>
</comment>
<comment type="similarity">
    <text evidence="3">Belongs to the T7likevirus i-spanin family.</text>
</comment>
<name>SPAN1_BPT7</name>
<keyword id="KW-0204">Cytolysis</keyword>
<keyword id="KW-1030">Host cell inner membrane</keyword>
<keyword id="KW-0578">Host cell lysis by virus</keyword>
<keyword id="KW-1032">Host cell membrane</keyword>
<keyword id="KW-1043">Host membrane</keyword>
<keyword id="KW-0378">Hydrolase</keyword>
<keyword id="KW-0472">Membrane</keyword>
<keyword id="KW-0645">Protease</keyword>
<keyword id="KW-1185">Reference proteome</keyword>
<keyword id="KW-0735">Signal-anchor</keyword>
<keyword id="KW-0812">Transmembrane</keyword>
<keyword id="KW-1133">Transmembrane helix</keyword>
<keyword id="KW-1188">Viral release from host cell</keyword>
<gene>
    <name type="ordered locus">18.5</name>
</gene>
<sequence>MLEFLRKLIPWVLAGMLFGLGWHLGSDSMDAKWKQEVHNEYVKRVEAAKSTQRAIDAVSAKYQEDLAALEGSTDRIISDLRSDNKRLRVRVKTTGTSDGQCGFEPDGRAELDDRDAKRILAVTQKGDAWIRALQDTIRELQRK</sequence>
<proteinExistence type="evidence at protein level"/>
<feature type="chain" id="PRO_0000106537" description="Spanin, inner membrane subunit">
    <location>
        <begin position="1"/>
        <end position="143"/>
    </location>
</feature>
<feature type="topological domain" description="Cytoplasmic" evidence="4">
    <location>
        <begin position="1"/>
        <end position="7"/>
    </location>
</feature>
<feature type="transmembrane region" description="Helical; Signal-anchor for type II membrane protein" evidence="1">
    <location>
        <begin position="8"/>
        <end position="24"/>
    </location>
</feature>
<feature type="topological domain" description="Periplasmic" evidence="4">
    <location>
        <begin position="25"/>
        <end position="143"/>
    </location>
</feature>
<organismHost>
    <name type="scientific">Escherichia coli</name>
    <dbReference type="NCBI Taxonomy" id="562"/>
</organismHost>
<protein>
    <recommendedName>
        <fullName evidence="2">Spanin, inner membrane subunit</fullName>
        <shortName>i-spanin</shortName>
    </recommendedName>
    <alternativeName>
        <fullName>Gene product 18.5</fullName>
        <shortName>Gp18.5</shortName>
    </alternativeName>
</protein>
<organism>
    <name type="scientific">Escherichia phage T7</name>
    <name type="common">Bacteriophage T7</name>
    <dbReference type="NCBI Taxonomy" id="10760"/>
    <lineage>
        <taxon>Viruses</taxon>
        <taxon>Duplodnaviria</taxon>
        <taxon>Heunggongvirae</taxon>
        <taxon>Uroviricota</taxon>
        <taxon>Caudoviricetes</taxon>
        <taxon>Autographiviridae</taxon>
        <taxon>Studiervirinae</taxon>
        <taxon>Teseptimavirus</taxon>
        <taxon>Teseptimavirus T7</taxon>
    </lineage>
</organism>
<dbReference type="EMBL" id="V01146">
    <property type="protein sequence ID" value="CAA24438.1"/>
    <property type="molecule type" value="Genomic_DNA"/>
</dbReference>
<dbReference type="PIR" id="A04428">
    <property type="entry name" value="Q8BPE7"/>
</dbReference>
<dbReference type="RefSeq" id="NP_042008.1">
    <property type="nucleotide sequence ID" value="NC_001604.1"/>
</dbReference>
<dbReference type="SMR" id="P03803"/>
<dbReference type="IntAct" id="P03803">
    <property type="interactions" value="1"/>
</dbReference>
<dbReference type="MINT" id="P03803"/>
<dbReference type="MEROPS" id="X19.002"/>
<dbReference type="TCDB" id="1.M.1.2.3">
    <property type="family name" value="the rz/rz1 spanin1 (rz(1)) family"/>
</dbReference>
<dbReference type="KEGG" id="vg:1261067"/>
<dbReference type="OrthoDB" id="12385at10239"/>
<dbReference type="Proteomes" id="UP000000840">
    <property type="component" value="Genome"/>
</dbReference>
<dbReference type="GO" id="GO:0020002">
    <property type="term" value="C:host cell plasma membrane"/>
    <property type="evidence" value="ECO:0007669"/>
    <property type="project" value="UniProtKB-SubCell"/>
</dbReference>
<dbReference type="GO" id="GO:0016020">
    <property type="term" value="C:membrane"/>
    <property type="evidence" value="ECO:0007669"/>
    <property type="project" value="UniProtKB-KW"/>
</dbReference>
<dbReference type="GO" id="GO:0008233">
    <property type="term" value="F:peptidase activity"/>
    <property type="evidence" value="ECO:0007669"/>
    <property type="project" value="UniProtKB-KW"/>
</dbReference>
<dbReference type="GO" id="GO:0006508">
    <property type="term" value="P:proteolysis"/>
    <property type="evidence" value="ECO:0007669"/>
    <property type="project" value="UniProtKB-KW"/>
</dbReference>
<dbReference type="GO" id="GO:0044659">
    <property type="term" value="P:viral release from host cell by cytolysis"/>
    <property type="evidence" value="ECO:0007669"/>
    <property type="project" value="InterPro"/>
</dbReference>
<dbReference type="InterPro" id="IPR004929">
    <property type="entry name" value="I-spanin"/>
</dbReference>
<dbReference type="InterPro" id="IPR016417">
    <property type="entry name" value="I-spanin_T7likevirus"/>
</dbReference>
<dbReference type="Pfam" id="PF03245">
    <property type="entry name" value="Phage_lysis"/>
    <property type="match status" value="1"/>
</dbReference>
<dbReference type="PIRSF" id="PIRSF004485">
    <property type="entry name" value="T7_18-5_prd"/>
    <property type="match status" value="1"/>
</dbReference>
<reference key="1">
    <citation type="journal article" date="1983" name="J. Mol. Biol.">
        <title>Complete nucleotide sequence of bacteriophage T7 DNA and the locations of T7 genetic elements.</title>
        <authorList>
            <person name="Dunn J.J."/>
            <person name="Studier F.W."/>
        </authorList>
    </citation>
    <scope>NUCLEOTIDE SEQUENCE [LARGE SCALE GENOMIC DNA]</scope>
</reference>
<reference key="2">
    <citation type="journal article" date="1996" name="Nat. Genet.">
        <title>A protein linkage map of Escherichia coli bacteriophage T7.</title>
        <authorList>
            <person name="Bartel P.L."/>
            <person name="Roecklein J.A."/>
            <person name="SenGupta D."/>
            <person name="Fields S."/>
        </authorList>
    </citation>
    <scope>INTERACTION WITH O-SPANIN</scope>
</reference>
<reference key="3">
    <citation type="journal article" date="2007" name="J. Mol. Biol.">
        <title>Rz/Rz1 lysis gene equivalents in phages of Gram-negative hosts.</title>
        <authorList>
            <person name="Summer E.J."/>
            <person name="Berry J."/>
            <person name="Tran T.A."/>
            <person name="Niu L."/>
            <person name="Struck D.K."/>
            <person name="Young R."/>
        </authorList>
    </citation>
    <scope>IDENTIFICATION</scope>
    <scope>FUNCTION</scope>
</reference>
<accession>P03803</accession>
<evidence type="ECO:0000255" key="1"/>
<evidence type="ECO:0000303" key="2">
    <source>
    </source>
</evidence>
<evidence type="ECO:0000305" key="3"/>
<evidence type="ECO:0000305" key="4">
    <source>
    </source>
</evidence>
<evidence type="ECO:0000305" key="5">
    <source>
    </source>
</evidence>